<accession>Q2FHQ5</accession>
<proteinExistence type="inferred from homology"/>
<reference key="1">
    <citation type="journal article" date="2006" name="Lancet">
        <title>Complete genome sequence of USA300, an epidemic clone of community-acquired meticillin-resistant Staphylococcus aureus.</title>
        <authorList>
            <person name="Diep B.A."/>
            <person name="Gill S.R."/>
            <person name="Chang R.F."/>
            <person name="Phan T.H."/>
            <person name="Chen J.H."/>
            <person name="Davidson M.G."/>
            <person name="Lin F."/>
            <person name="Lin J."/>
            <person name="Carleton H.A."/>
            <person name="Mongodin E.F."/>
            <person name="Sensabaugh G.F."/>
            <person name="Perdreau-Remington F."/>
        </authorList>
    </citation>
    <scope>NUCLEOTIDE SEQUENCE [LARGE SCALE GENOMIC DNA]</scope>
    <source>
        <strain>USA300</strain>
    </source>
</reference>
<dbReference type="EC" id="2.7.8.13" evidence="1"/>
<dbReference type="EMBL" id="CP000255">
    <property type="protein sequence ID" value="ABD20800.1"/>
    <property type="molecule type" value="Genomic_DNA"/>
</dbReference>
<dbReference type="RefSeq" id="WP_000578458.1">
    <property type="nucleotide sequence ID" value="NZ_CP027476.1"/>
</dbReference>
<dbReference type="SMR" id="Q2FHQ5"/>
<dbReference type="KEGG" id="saa:SAUSA300_1076"/>
<dbReference type="HOGENOM" id="CLU_023982_0_1_9"/>
<dbReference type="OMA" id="DTPTMGG"/>
<dbReference type="UniPathway" id="UPA00219"/>
<dbReference type="Proteomes" id="UP000001939">
    <property type="component" value="Chromosome"/>
</dbReference>
<dbReference type="GO" id="GO:0005886">
    <property type="term" value="C:plasma membrane"/>
    <property type="evidence" value="ECO:0007669"/>
    <property type="project" value="UniProtKB-SubCell"/>
</dbReference>
<dbReference type="GO" id="GO:0046872">
    <property type="term" value="F:metal ion binding"/>
    <property type="evidence" value="ECO:0007669"/>
    <property type="project" value="UniProtKB-KW"/>
</dbReference>
<dbReference type="GO" id="GO:0008963">
    <property type="term" value="F:phospho-N-acetylmuramoyl-pentapeptide-transferase activity"/>
    <property type="evidence" value="ECO:0007669"/>
    <property type="project" value="UniProtKB-UniRule"/>
</dbReference>
<dbReference type="GO" id="GO:0051301">
    <property type="term" value="P:cell division"/>
    <property type="evidence" value="ECO:0007669"/>
    <property type="project" value="UniProtKB-KW"/>
</dbReference>
<dbReference type="GO" id="GO:0071555">
    <property type="term" value="P:cell wall organization"/>
    <property type="evidence" value="ECO:0007669"/>
    <property type="project" value="UniProtKB-KW"/>
</dbReference>
<dbReference type="GO" id="GO:0009252">
    <property type="term" value="P:peptidoglycan biosynthetic process"/>
    <property type="evidence" value="ECO:0007669"/>
    <property type="project" value="UniProtKB-UniRule"/>
</dbReference>
<dbReference type="GO" id="GO:0008360">
    <property type="term" value="P:regulation of cell shape"/>
    <property type="evidence" value="ECO:0007669"/>
    <property type="project" value="UniProtKB-KW"/>
</dbReference>
<dbReference type="CDD" id="cd06852">
    <property type="entry name" value="GT_MraY"/>
    <property type="match status" value="1"/>
</dbReference>
<dbReference type="HAMAP" id="MF_00038">
    <property type="entry name" value="MraY"/>
    <property type="match status" value="1"/>
</dbReference>
<dbReference type="InterPro" id="IPR000715">
    <property type="entry name" value="Glycosyl_transferase_4"/>
</dbReference>
<dbReference type="InterPro" id="IPR003524">
    <property type="entry name" value="PNAcMuramoyl-5peptid_Trfase"/>
</dbReference>
<dbReference type="InterPro" id="IPR018480">
    <property type="entry name" value="PNAcMuramoyl-5peptid_Trfase_CS"/>
</dbReference>
<dbReference type="NCBIfam" id="TIGR00445">
    <property type="entry name" value="mraY"/>
    <property type="match status" value="1"/>
</dbReference>
<dbReference type="PANTHER" id="PTHR22926">
    <property type="entry name" value="PHOSPHO-N-ACETYLMURAMOYL-PENTAPEPTIDE-TRANSFERASE"/>
    <property type="match status" value="1"/>
</dbReference>
<dbReference type="PANTHER" id="PTHR22926:SF5">
    <property type="entry name" value="PHOSPHO-N-ACETYLMURAMOYL-PENTAPEPTIDE-TRANSFERASE HOMOLOG"/>
    <property type="match status" value="1"/>
</dbReference>
<dbReference type="Pfam" id="PF00953">
    <property type="entry name" value="Glycos_transf_4"/>
    <property type="match status" value="1"/>
</dbReference>
<dbReference type="PROSITE" id="PS01347">
    <property type="entry name" value="MRAY_1"/>
    <property type="match status" value="1"/>
</dbReference>
<dbReference type="PROSITE" id="PS01348">
    <property type="entry name" value="MRAY_2"/>
    <property type="match status" value="1"/>
</dbReference>
<name>MRAY_STAA3</name>
<gene>
    <name evidence="1" type="primary">mraY</name>
    <name type="ordered locus">SAUSA300_1076</name>
</gene>
<feature type="chain" id="PRO_0000235485" description="Phospho-N-acetylmuramoyl-pentapeptide-transferase">
    <location>
        <begin position="1"/>
        <end position="321"/>
    </location>
</feature>
<feature type="transmembrane region" description="Helical" evidence="1">
    <location>
        <begin position="1"/>
        <end position="21"/>
    </location>
</feature>
<feature type="transmembrane region" description="Helical" evidence="1">
    <location>
        <begin position="50"/>
        <end position="70"/>
    </location>
</feature>
<feature type="transmembrane region" description="Helical" evidence="1">
    <location>
        <begin position="76"/>
        <end position="96"/>
    </location>
</feature>
<feature type="transmembrane region" description="Helical" evidence="1">
    <location>
        <begin position="112"/>
        <end position="132"/>
    </location>
</feature>
<feature type="transmembrane region" description="Helical" evidence="1">
    <location>
        <begin position="140"/>
        <end position="160"/>
    </location>
</feature>
<feature type="transmembrane region" description="Helical" evidence="1">
    <location>
        <begin position="176"/>
        <end position="196"/>
    </location>
</feature>
<feature type="transmembrane region" description="Helical" evidence="1">
    <location>
        <begin position="200"/>
        <end position="220"/>
    </location>
</feature>
<feature type="transmembrane region" description="Helical" evidence="1">
    <location>
        <begin position="225"/>
        <end position="245"/>
    </location>
</feature>
<feature type="transmembrane region" description="Helical" evidence="1">
    <location>
        <begin position="250"/>
        <end position="270"/>
    </location>
</feature>
<feature type="transmembrane region" description="Helical" evidence="1">
    <location>
        <begin position="300"/>
        <end position="320"/>
    </location>
</feature>
<protein>
    <recommendedName>
        <fullName evidence="1">Phospho-N-acetylmuramoyl-pentapeptide-transferase</fullName>
        <ecNumber evidence="1">2.7.8.13</ecNumber>
    </recommendedName>
    <alternativeName>
        <fullName evidence="1">UDP-MurNAc-pentapeptide phosphotransferase</fullName>
    </alternativeName>
</protein>
<evidence type="ECO:0000255" key="1">
    <source>
        <dbReference type="HAMAP-Rule" id="MF_00038"/>
    </source>
</evidence>
<organism>
    <name type="scientific">Staphylococcus aureus (strain USA300)</name>
    <dbReference type="NCBI Taxonomy" id="367830"/>
    <lineage>
        <taxon>Bacteria</taxon>
        <taxon>Bacillati</taxon>
        <taxon>Bacillota</taxon>
        <taxon>Bacilli</taxon>
        <taxon>Bacillales</taxon>
        <taxon>Staphylococcaceae</taxon>
        <taxon>Staphylococcus</taxon>
    </lineage>
</organism>
<keyword id="KW-0131">Cell cycle</keyword>
<keyword id="KW-0132">Cell division</keyword>
<keyword id="KW-1003">Cell membrane</keyword>
<keyword id="KW-0133">Cell shape</keyword>
<keyword id="KW-0961">Cell wall biogenesis/degradation</keyword>
<keyword id="KW-0460">Magnesium</keyword>
<keyword id="KW-0472">Membrane</keyword>
<keyword id="KW-0479">Metal-binding</keyword>
<keyword id="KW-0573">Peptidoglycan synthesis</keyword>
<keyword id="KW-0808">Transferase</keyword>
<keyword id="KW-0812">Transmembrane</keyword>
<keyword id="KW-1133">Transmembrane helix</keyword>
<comment type="function">
    <text evidence="1">Catalyzes the initial step of the lipid cycle reactions in the biosynthesis of the cell wall peptidoglycan: transfers peptidoglycan precursor phospho-MurNAc-pentapeptide from UDP-MurNAc-pentapeptide onto the lipid carrier undecaprenyl phosphate, yielding undecaprenyl-pyrophosphoryl-MurNAc-pentapeptide, known as lipid I.</text>
</comment>
<comment type="catalytic activity">
    <reaction evidence="1">
        <text>UDP-N-acetyl-alpha-D-muramoyl-L-alanyl-gamma-D-glutamyl-L-lysyl-D-alanyl-D-alanine + di-trans,octa-cis-undecaprenyl phosphate = Mur2Ac(oyl-L-Ala-gamma-D-Glu-L-Lys-D-Ala-D-Ala)-di-trans,octa-cis-undecaprenyl diphosphate + UMP</text>
        <dbReference type="Rhea" id="RHEA:21920"/>
        <dbReference type="ChEBI" id="CHEBI:57865"/>
        <dbReference type="ChEBI" id="CHEBI:60032"/>
        <dbReference type="ChEBI" id="CHEBI:60392"/>
        <dbReference type="ChEBI" id="CHEBI:70758"/>
        <dbReference type="EC" id="2.7.8.13"/>
    </reaction>
</comment>
<comment type="cofactor">
    <cofactor evidence="1">
        <name>Mg(2+)</name>
        <dbReference type="ChEBI" id="CHEBI:18420"/>
    </cofactor>
</comment>
<comment type="pathway">
    <text evidence="1">Cell wall biogenesis; peptidoglycan biosynthesis.</text>
</comment>
<comment type="subcellular location">
    <subcellularLocation>
        <location evidence="1">Cell membrane</location>
        <topology evidence="1">Multi-pass membrane protein</topology>
    </subcellularLocation>
</comment>
<comment type="similarity">
    <text evidence="1">Belongs to the glycosyltransferase 4 family. MraY subfamily.</text>
</comment>
<sequence length="321" mass="35232">MIFVYALLALVITFVLVPVLIPTLKRMKFGQSIREEGPQSHMKKTGTPTMGGLTFLLSIVITSLVAIIFVDQANPIILLLFVTIGFGLIGFIDDYIIVVKKNNQGLTSKQKFLAQIGIAIIFFVLSNVFHLVNFSTSIHIPFTNVAIPLSFAYVIFIVFWQVGFSNAVNLTDGLDGLATGLSIIGFTMYAIMSFVLGETAIGIFCIIMLFALLGFLPYNINPAKVFMGDTGSLALGGIFATISIMLNQELSLIFIGLVFVIETLSVMLQVASFKLTGKRIFKMSPIHHHFELIGWSEWKVVTVFWAVGLISGLIGLWIGVH</sequence>